<organism>
    <name type="scientific">Arthroderma benhamiae (strain ATCC MYA-4681 / CBS 112371)</name>
    <name type="common">Trichophyton mentagrophytes</name>
    <dbReference type="NCBI Taxonomy" id="663331"/>
    <lineage>
        <taxon>Eukaryota</taxon>
        <taxon>Fungi</taxon>
        <taxon>Dikarya</taxon>
        <taxon>Ascomycota</taxon>
        <taxon>Pezizomycotina</taxon>
        <taxon>Eurotiomycetes</taxon>
        <taxon>Eurotiomycetidae</taxon>
        <taxon>Onygenales</taxon>
        <taxon>Arthrodermataceae</taxon>
        <taxon>Trichophyton</taxon>
    </lineage>
</organism>
<protein>
    <recommendedName>
        <fullName evidence="6">Uncharacterized FAD-linked oxidoreductase ARB_02478</fullName>
        <ecNumber evidence="6">1.-.-.-</ecNumber>
    </recommendedName>
</protein>
<gene>
    <name type="ORF">ARB_07056</name>
</gene>
<feature type="signal peptide" evidence="2">
    <location>
        <begin position="1"/>
        <end position="19"/>
    </location>
</feature>
<feature type="chain" id="PRO_0000434915" description="Uncharacterized FAD-linked oxidoreductase ARB_02478">
    <location>
        <begin position="20"/>
        <end position="588"/>
    </location>
</feature>
<feature type="domain" description="FAD-binding PCMH-type" evidence="4">
    <location>
        <begin position="118"/>
        <end position="303"/>
    </location>
</feature>
<feature type="modified residue" description="Pros-8alpha-FAD histidine" evidence="1">
    <location>
        <position position="156"/>
    </location>
</feature>
<feature type="glycosylation site" description="N-linked (GlcNAc...) asparagine" evidence="3">
    <location>
        <position position="45"/>
    </location>
</feature>
<feature type="glycosylation site" description="N-linked (GlcNAc...) asparagine" evidence="3">
    <location>
        <position position="104"/>
    </location>
</feature>
<feature type="glycosylation site" description="N-linked (GlcNAc...) asparagine" evidence="3">
    <location>
        <position position="179"/>
    </location>
</feature>
<feature type="glycosylation site" description="N-linked (GlcNAc...) asparagine" evidence="3">
    <location>
        <position position="312"/>
    </location>
</feature>
<feature type="glycosylation site" description="N-linked (GlcNAc...) asparagine" evidence="3">
    <location>
        <position position="320"/>
    </location>
</feature>
<feature type="glycosylation site" description="N-linked (GlcNAc...) asparagine" evidence="3">
    <location>
        <position position="351"/>
    </location>
</feature>
<feature type="glycosylation site" description="N-linked (GlcNAc...) asparagine" evidence="3">
    <location>
        <position position="370"/>
    </location>
</feature>
<feature type="glycosylation site" description="N-linked (GlcNAc...) asparagine" evidence="3">
    <location>
        <position position="446"/>
    </location>
</feature>
<accession>D4AS41</accession>
<dbReference type="EC" id="1.-.-.-" evidence="6"/>
<dbReference type="EMBL" id="ABSU01000007">
    <property type="protein sequence ID" value="EFE34105.1"/>
    <property type="status" value="ALT_SEQ"/>
    <property type="molecule type" value="Genomic_DNA"/>
</dbReference>
<dbReference type="RefSeq" id="XP_003014494.1">
    <property type="nucleotide sequence ID" value="XM_003014448.1"/>
</dbReference>
<dbReference type="SMR" id="D4AS41"/>
<dbReference type="GeneID" id="9520546"/>
<dbReference type="KEGG" id="abe:ARB_07056"/>
<dbReference type="eggNOG" id="ENOG502QQWK">
    <property type="taxonomic scope" value="Eukaryota"/>
</dbReference>
<dbReference type="HOGENOM" id="CLU_018354_4_2_1"/>
<dbReference type="OrthoDB" id="9983560at2759"/>
<dbReference type="Proteomes" id="UP000008866">
    <property type="component" value="Unassembled WGS sequence"/>
</dbReference>
<dbReference type="GO" id="GO:0005576">
    <property type="term" value="C:extracellular region"/>
    <property type="evidence" value="ECO:0007669"/>
    <property type="project" value="UniProtKB-SubCell"/>
</dbReference>
<dbReference type="GO" id="GO:0071949">
    <property type="term" value="F:FAD binding"/>
    <property type="evidence" value="ECO:0007669"/>
    <property type="project" value="InterPro"/>
</dbReference>
<dbReference type="GO" id="GO:0016491">
    <property type="term" value="F:oxidoreductase activity"/>
    <property type="evidence" value="ECO:0007669"/>
    <property type="project" value="UniProtKB-KW"/>
</dbReference>
<dbReference type="Gene3D" id="3.30.465.10">
    <property type="match status" value="2"/>
</dbReference>
<dbReference type="InterPro" id="IPR012951">
    <property type="entry name" value="BBE"/>
</dbReference>
<dbReference type="InterPro" id="IPR016166">
    <property type="entry name" value="FAD-bd_PCMH"/>
</dbReference>
<dbReference type="InterPro" id="IPR036318">
    <property type="entry name" value="FAD-bd_PCMH-like_sf"/>
</dbReference>
<dbReference type="InterPro" id="IPR016169">
    <property type="entry name" value="FAD-bd_PCMH_sub2"/>
</dbReference>
<dbReference type="InterPro" id="IPR050432">
    <property type="entry name" value="FAD-linked_Oxidoreductases_BP"/>
</dbReference>
<dbReference type="InterPro" id="IPR006094">
    <property type="entry name" value="Oxid_FAD_bind_N"/>
</dbReference>
<dbReference type="PANTHER" id="PTHR13878:SF155">
    <property type="entry name" value="ALCOHOL OXIDASE, PUTATIVE (AFU_ORTHOLOGUE AFUA_4G00430)-RELATED"/>
    <property type="match status" value="1"/>
</dbReference>
<dbReference type="PANTHER" id="PTHR13878">
    <property type="entry name" value="GULONOLACTONE OXIDASE"/>
    <property type="match status" value="1"/>
</dbReference>
<dbReference type="Pfam" id="PF08031">
    <property type="entry name" value="BBE"/>
    <property type="match status" value="1"/>
</dbReference>
<dbReference type="Pfam" id="PF01565">
    <property type="entry name" value="FAD_binding_4"/>
    <property type="match status" value="1"/>
</dbReference>
<dbReference type="SUPFAM" id="SSF56176">
    <property type="entry name" value="FAD-binding/transporter-associated domain-like"/>
    <property type="match status" value="1"/>
</dbReference>
<dbReference type="PROSITE" id="PS51387">
    <property type="entry name" value="FAD_PCMH"/>
    <property type="match status" value="1"/>
</dbReference>
<reference key="1">
    <citation type="journal article" date="2011" name="Genome Biol.">
        <title>Comparative and functional genomics provide insights into the pathogenicity of dermatophytic fungi.</title>
        <authorList>
            <person name="Burmester A."/>
            <person name="Shelest E."/>
            <person name="Gloeckner G."/>
            <person name="Heddergott C."/>
            <person name="Schindler S."/>
            <person name="Staib P."/>
            <person name="Heidel A."/>
            <person name="Felder M."/>
            <person name="Petzold A."/>
            <person name="Szafranski K."/>
            <person name="Feuermann M."/>
            <person name="Pedruzzi I."/>
            <person name="Priebe S."/>
            <person name="Groth M."/>
            <person name="Winkler R."/>
            <person name="Li W."/>
            <person name="Kniemeyer O."/>
            <person name="Schroeckh V."/>
            <person name="Hertweck C."/>
            <person name="Hube B."/>
            <person name="White T.C."/>
            <person name="Platzer M."/>
            <person name="Guthke R."/>
            <person name="Heitman J."/>
            <person name="Woestemeyer J."/>
            <person name="Zipfel P.F."/>
            <person name="Monod M."/>
            <person name="Brakhage A.A."/>
        </authorList>
    </citation>
    <scope>NUCLEOTIDE SEQUENCE [LARGE SCALE GENOMIC DNA]</scope>
    <source>
        <strain>ATCC MYA-4681 / CBS 112371</strain>
    </source>
</reference>
<reference key="2">
    <citation type="journal article" date="2011" name="Proteomics">
        <title>Identification of novel secreted proteases during extracellular proteolysis by dermatophytes at acidic pH.</title>
        <authorList>
            <person name="Sriranganadane D."/>
            <person name="Waridel P."/>
            <person name="Salamin K."/>
            <person name="Feuermann M."/>
            <person name="Mignon B."/>
            <person name="Staib P."/>
            <person name="Neuhaus J.M."/>
            <person name="Quadroni M."/>
            <person name="Monod M."/>
        </authorList>
    </citation>
    <scope>IDENTIFICATION BY MASS SPECTROMETRY</scope>
    <scope>SUBCELLULAR LOCATION</scope>
</reference>
<sequence length="588" mass="63347">MRSTAYLTALLSFLGATHAAPEGPRCRCTPDQSCWPSPGLWQTLNKTLSGNLVAVKPVGTVCHDPTYNGGLCDSVKGMQTDSSWRSAQPGAVQSINWETWPEKNESCYIDGPRQVPCGQGRIPLYSAVVQSPLDIQKTVRFASKYNLRLVIKNTGHDFLGRSTGPQSLQILTHNMKSINFTDNFVPEGKPDGRGIGQAVTIGAGVQLNELYEAAGKRGLTQVIGLSTTVGAAGGYIQGGGHSPLGPWKGMSTDHVLEYKVVTAGAKFVTANEYQNSDLFWALRGGGGGTFGVVTSVTLRTFKDPPTIVSQVNVTMDGKANESYWAAVEKFQAYLPTLSDGGCSGYYYMLPNVTLGPQSAAVIIAAFYYANKTDKAHVDNLYRPLFASLSSIPGINVASVSVPVSSSTEAFRSAFDQKPPRDGGGVNILGSRLFSRKLLEAPGGAANLTAALSKLDFKNLQPAIGHLVAGGQVAKNTHIQSALNPSWRKALVHLVISRDWSIDSTFAEQEKISTKLTAEEIPLLAAVEPDMGAYTNEADVNEPRFQQTFWGTNYNTLLRVKNRWDPRGLFFVRSGVGSEAWDKQGLCRA</sequence>
<proteinExistence type="evidence at protein level"/>
<name>A7056_ARTBC</name>
<keyword id="KW-0274">FAD</keyword>
<keyword id="KW-0285">Flavoprotein</keyword>
<keyword id="KW-0325">Glycoprotein</keyword>
<keyword id="KW-0560">Oxidoreductase</keyword>
<keyword id="KW-1185">Reference proteome</keyword>
<keyword id="KW-0964">Secreted</keyword>
<keyword id="KW-0732">Signal</keyword>
<comment type="cofactor">
    <cofactor evidence="6">
        <name>FAD</name>
        <dbReference type="ChEBI" id="CHEBI:57692"/>
    </cofactor>
</comment>
<comment type="subcellular location">
    <subcellularLocation>
        <location evidence="5">Secreted</location>
    </subcellularLocation>
</comment>
<comment type="similarity">
    <text evidence="6">Belongs to the oxygen-dependent FAD-linked oxidoreductase family.</text>
</comment>
<comment type="sequence caution" evidence="6">
    <conflict type="erroneous gene model prediction">
        <sequence resource="EMBL-CDS" id="EFE34105"/>
    </conflict>
</comment>
<evidence type="ECO:0000250" key="1">
    <source>
        <dbReference type="UniProtKB" id="P08159"/>
    </source>
</evidence>
<evidence type="ECO:0000255" key="2"/>
<evidence type="ECO:0000255" key="3">
    <source>
        <dbReference type="PROSITE-ProRule" id="PRU00498"/>
    </source>
</evidence>
<evidence type="ECO:0000255" key="4">
    <source>
        <dbReference type="PROSITE-ProRule" id="PRU00718"/>
    </source>
</evidence>
<evidence type="ECO:0000269" key="5">
    <source>
    </source>
</evidence>
<evidence type="ECO:0000305" key="6"/>